<reference key="1">
    <citation type="journal article" date="2001" name="Nature">
        <title>Genome sequence of Yersinia pestis, the causative agent of plague.</title>
        <authorList>
            <person name="Parkhill J."/>
            <person name="Wren B.W."/>
            <person name="Thomson N.R."/>
            <person name="Titball R.W."/>
            <person name="Holden M.T.G."/>
            <person name="Prentice M.B."/>
            <person name="Sebaihia M."/>
            <person name="James K.D."/>
            <person name="Churcher C.M."/>
            <person name="Mungall K.L."/>
            <person name="Baker S."/>
            <person name="Basham D."/>
            <person name="Bentley S.D."/>
            <person name="Brooks K."/>
            <person name="Cerdeno-Tarraga A.-M."/>
            <person name="Chillingworth T."/>
            <person name="Cronin A."/>
            <person name="Davies R.M."/>
            <person name="Davis P."/>
            <person name="Dougan G."/>
            <person name="Feltwell T."/>
            <person name="Hamlin N."/>
            <person name="Holroyd S."/>
            <person name="Jagels K."/>
            <person name="Karlyshev A.V."/>
            <person name="Leather S."/>
            <person name="Moule S."/>
            <person name="Oyston P.C.F."/>
            <person name="Quail M.A."/>
            <person name="Rutherford K.M."/>
            <person name="Simmonds M."/>
            <person name="Skelton J."/>
            <person name="Stevens K."/>
            <person name="Whitehead S."/>
            <person name="Barrell B.G."/>
        </authorList>
    </citation>
    <scope>NUCLEOTIDE SEQUENCE [LARGE SCALE GENOMIC DNA]</scope>
    <source>
        <strain>CO-92 / Biovar Orientalis</strain>
    </source>
</reference>
<reference key="2">
    <citation type="journal article" date="2002" name="J. Bacteriol.">
        <title>Genome sequence of Yersinia pestis KIM.</title>
        <authorList>
            <person name="Deng W."/>
            <person name="Burland V."/>
            <person name="Plunkett G. III"/>
            <person name="Boutin A."/>
            <person name="Mayhew G.F."/>
            <person name="Liss P."/>
            <person name="Perna N.T."/>
            <person name="Rose D.J."/>
            <person name="Mau B."/>
            <person name="Zhou S."/>
            <person name="Schwartz D.C."/>
            <person name="Fetherston J.D."/>
            <person name="Lindler L.E."/>
            <person name="Brubaker R.R."/>
            <person name="Plano G.V."/>
            <person name="Straley S.C."/>
            <person name="McDonough K.A."/>
            <person name="Nilles M.L."/>
            <person name="Matson J.S."/>
            <person name="Blattner F.R."/>
            <person name="Perry R.D."/>
        </authorList>
    </citation>
    <scope>NUCLEOTIDE SEQUENCE [LARGE SCALE GENOMIC DNA]</scope>
    <source>
        <strain>KIM10+ / Biovar Mediaevalis</strain>
    </source>
</reference>
<reference key="3">
    <citation type="journal article" date="2004" name="DNA Res.">
        <title>Complete genome sequence of Yersinia pestis strain 91001, an isolate avirulent to humans.</title>
        <authorList>
            <person name="Song Y."/>
            <person name="Tong Z."/>
            <person name="Wang J."/>
            <person name="Wang L."/>
            <person name="Guo Z."/>
            <person name="Han Y."/>
            <person name="Zhang J."/>
            <person name="Pei D."/>
            <person name="Zhou D."/>
            <person name="Qin H."/>
            <person name="Pang X."/>
            <person name="Han Y."/>
            <person name="Zhai J."/>
            <person name="Li M."/>
            <person name="Cui B."/>
            <person name="Qi Z."/>
            <person name="Jin L."/>
            <person name="Dai R."/>
            <person name="Chen F."/>
            <person name="Li S."/>
            <person name="Ye C."/>
            <person name="Du Z."/>
            <person name="Lin W."/>
            <person name="Wang J."/>
            <person name="Yu J."/>
            <person name="Yang H."/>
            <person name="Wang J."/>
            <person name="Huang P."/>
            <person name="Yang R."/>
        </authorList>
    </citation>
    <scope>NUCLEOTIDE SEQUENCE [LARGE SCALE GENOMIC DNA]</scope>
    <source>
        <strain>91001 / Biovar Mediaevalis</strain>
    </source>
</reference>
<feature type="chain" id="PRO_0000135887" description="Histidinol dehydrogenase">
    <location>
        <begin position="1"/>
        <end position="443"/>
    </location>
</feature>
<feature type="active site" description="Proton acceptor" evidence="1">
    <location>
        <position position="329"/>
    </location>
</feature>
<feature type="active site" description="Proton acceptor" evidence="1">
    <location>
        <position position="330"/>
    </location>
</feature>
<feature type="binding site" evidence="1">
    <location>
        <position position="133"/>
    </location>
    <ligand>
        <name>NAD(+)</name>
        <dbReference type="ChEBI" id="CHEBI:57540"/>
    </ligand>
</feature>
<feature type="binding site" evidence="1">
    <location>
        <position position="191"/>
    </location>
    <ligand>
        <name>NAD(+)</name>
        <dbReference type="ChEBI" id="CHEBI:57540"/>
    </ligand>
</feature>
<feature type="binding site" evidence="1">
    <location>
        <position position="214"/>
    </location>
    <ligand>
        <name>NAD(+)</name>
        <dbReference type="ChEBI" id="CHEBI:57540"/>
    </ligand>
</feature>
<feature type="binding site" evidence="1">
    <location>
        <position position="240"/>
    </location>
    <ligand>
        <name>substrate</name>
    </ligand>
</feature>
<feature type="binding site" evidence="1">
    <location>
        <position position="262"/>
    </location>
    <ligand>
        <name>substrate</name>
    </ligand>
</feature>
<feature type="binding site" evidence="1">
    <location>
        <position position="262"/>
    </location>
    <ligand>
        <name>Zn(2+)</name>
        <dbReference type="ChEBI" id="CHEBI:29105"/>
    </ligand>
</feature>
<feature type="binding site" evidence="1">
    <location>
        <position position="265"/>
    </location>
    <ligand>
        <name>substrate</name>
    </ligand>
</feature>
<feature type="binding site" evidence="1">
    <location>
        <position position="265"/>
    </location>
    <ligand>
        <name>Zn(2+)</name>
        <dbReference type="ChEBI" id="CHEBI:29105"/>
    </ligand>
</feature>
<feature type="binding site" evidence="1">
    <location>
        <position position="330"/>
    </location>
    <ligand>
        <name>substrate</name>
    </ligand>
</feature>
<feature type="binding site" evidence="1">
    <location>
        <position position="363"/>
    </location>
    <ligand>
        <name>substrate</name>
    </ligand>
</feature>
<feature type="binding site" evidence="1">
    <location>
        <position position="363"/>
    </location>
    <ligand>
        <name>Zn(2+)</name>
        <dbReference type="ChEBI" id="CHEBI:29105"/>
    </ligand>
</feature>
<feature type="binding site" evidence="1">
    <location>
        <position position="417"/>
    </location>
    <ligand>
        <name>substrate</name>
    </ligand>
</feature>
<feature type="binding site" evidence="1">
    <location>
        <position position="422"/>
    </location>
    <ligand>
        <name>substrate</name>
    </ligand>
</feature>
<feature type="binding site" evidence="1">
    <location>
        <position position="422"/>
    </location>
    <ligand>
        <name>Zn(2+)</name>
        <dbReference type="ChEBI" id="CHEBI:29105"/>
    </ligand>
</feature>
<accession>Q8ZFX5</accession>
<accession>Q0WGM4</accession>
<comment type="function">
    <text evidence="1">Catalyzes the sequential NAD-dependent oxidations of L-histidinol to L-histidinaldehyde and then to L-histidine.</text>
</comment>
<comment type="catalytic activity">
    <reaction evidence="1">
        <text>L-histidinol + 2 NAD(+) + H2O = L-histidine + 2 NADH + 3 H(+)</text>
        <dbReference type="Rhea" id="RHEA:20641"/>
        <dbReference type="ChEBI" id="CHEBI:15377"/>
        <dbReference type="ChEBI" id="CHEBI:15378"/>
        <dbReference type="ChEBI" id="CHEBI:57540"/>
        <dbReference type="ChEBI" id="CHEBI:57595"/>
        <dbReference type="ChEBI" id="CHEBI:57699"/>
        <dbReference type="ChEBI" id="CHEBI:57945"/>
        <dbReference type="EC" id="1.1.1.23"/>
    </reaction>
</comment>
<comment type="cofactor">
    <cofactor evidence="1">
        <name>Zn(2+)</name>
        <dbReference type="ChEBI" id="CHEBI:29105"/>
    </cofactor>
    <text evidence="1">Binds 1 zinc ion per subunit.</text>
</comment>
<comment type="pathway">
    <text evidence="1">Amino-acid biosynthesis; L-histidine biosynthesis; L-histidine from 5-phospho-alpha-D-ribose 1-diphosphate: step 9/9.</text>
</comment>
<comment type="subunit">
    <text evidence="1">Homodimer.</text>
</comment>
<comment type="similarity">
    <text evidence="1">Belongs to the histidinol dehydrogenase family.</text>
</comment>
<protein>
    <recommendedName>
        <fullName evidence="1">Histidinol dehydrogenase</fullName>
        <shortName evidence="1">HDH</shortName>
        <ecNumber evidence="1">1.1.1.23</ecNumber>
    </recommendedName>
</protein>
<gene>
    <name evidence="1" type="primary">hisD</name>
    <name type="ordered locus">YPO1548</name>
    <name type="ordered locus">y2621</name>
    <name type="ordered locus">YP_1437</name>
</gene>
<name>HISX_YERPE</name>
<proteinExistence type="inferred from homology"/>
<sequence>MQPTNFNTLINWQQCSEEQQKALLSRPAINASERITAAVSDILDRVKAEGDSALRDFSQRFDHVQVADIRITASEIAAASARLSDDVKHAMAQAVRNIEIFHNAQKMPVVDVETQPGVRCQQITRPIASVGLYIPGGSAPLPSTVLMLGTPARIAGCQRVVLCSPPPIADEILYAAQLCGIQEVFQIGGAQAIAAMAFGSESVPKVHKIFGPGNAYVTEAKRQVSQRLDGAAIDMPAGPSEVLVIADSGATPAFIAADLLSQAEHGPDSQVILLTPDAAIAQAVAVEVEQQLALLSRADIARQALESSRLIVTNDLQQCIDISNAYGPEHLILQIRQPEEIIDQIDNAGSVFMGDWSPESAGDYASGTNHVLPTYGYTSTYSSLGLADFVKRMTVQQLTPQGLLGLASTIETLAQAEQLTAHKNAVTLRVTALNNALTAVNKE</sequence>
<keyword id="KW-0028">Amino-acid biosynthesis</keyword>
<keyword id="KW-0368">Histidine biosynthesis</keyword>
<keyword id="KW-0479">Metal-binding</keyword>
<keyword id="KW-0520">NAD</keyword>
<keyword id="KW-0560">Oxidoreductase</keyword>
<keyword id="KW-1185">Reference proteome</keyword>
<keyword id="KW-0862">Zinc</keyword>
<organism>
    <name type="scientific">Yersinia pestis</name>
    <dbReference type="NCBI Taxonomy" id="632"/>
    <lineage>
        <taxon>Bacteria</taxon>
        <taxon>Pseudomonadati</taxon>
        <taxon>Pseudomonadota</taxon>
        <taxon>Gammaproteobacteria</taxon>
        <taxon>Enterobacterales</taxon>
        <taxon>Yersiniaceae</taxon>
        <taxon>Yersinia</taxon>
    </lineage>
</organism>
<dbReference type="EC" id="1.1.1.23" evidence="1"/>
<dbReference type="EMBL" id="AL590842">
    <property type="protein sequence ID" value="CAL20194.1"/>
    <property type="molecule type" value="Genomic_DNA"/>
</dbReference>
<dbReference type="EMBL" id="AE009952">
    <property type="protein sequence ID" value="AAM86175.1"/>
    <property type="molecule type" value="Genomic_DNA"/>
</dbReference>
<dbReference type="EMBL" id="AE017042">
    <property type="protein sequence ID" value="AAS61678.1"/>
    <property type="molecule type" value="Genomic_DNA"/>
</dbReference>
<dbReference type="PIR" id="AH0188">
    <property type="entry name" value="AH0188"/>
</dbReference>
<dbReference type="RefSeq" id="WP_002211895.1">
    <property type="nucleotide sequence ID" value="NZ_WUCM01000031.1"/>
</dbReference>
<dbReference type="RefSeq" id="YP_002346564.1">
    <property type="nucleotide sequence ID" value="NC_003143.1"/>
</dbReference>
<dbReference type="SMR" id="Q8ZFX5"/>
<dbReference type="IntAct" id="Q8ZFX5">
    <property type="interactions" value="10"/>
</dbReference>
<dbReference type="STRING" id="214092.YPO1548"/>
<dbReference type="PaxDb" id="214092-YPO1548"/>
<dbReference type="DNASU" id="1147568"/>
<dbReference type="EnsemblBacteria" id="AAS61678">
    <property type="protein sequence ID" value="AAS61678"/>
    <property type="gene ID" value="YP_1437"/>
</dbReference>
<dbReference type="GeneID" id="57977020"/>
<dbReference type="KEGG" id="ype:YPO1548"/>
<dbReference type="KEGG" id="ypk:y2621"/>
<dbReference type="KEGG" id="ypm:YP_1437"/>
<dbReference type="PATRIC" id="fig|214092.21.peg.1885"/>
<dbReference type="eggNOG" id="COG0141">
    <property type="taxonomic scope" value="Bacteria"/>
</dbReference>
<dbReference type="HOGENOM" id="CLU_006732_3_0_6"/>
<dbReference type="OMA" id="YIAGPNH"/>
<dbReference type="OrthoDB" id="9805269at2"/>
<dbReference type="UniPathway" id="UPA00031">
    <property type="reaction ID" value="UER00014"/>
</dbReference>
<dbReference type="Proteomes" id="UP000000815">
    <property type="component" value="Chromosome"/>
</dbReference>
<dbReference type="Proteomes" id="UP000001019">
    <property type="component" value="Chromosome"/>
</dbReference>
<dbReference type="Proteomes" id="UP000002490">
    <property type="component" value="Chromosome"/>
</dbReference>
<dbReference type="GO" id="GO:0005737">
    <property type="term" value="C:cytoplasm"/>
    <property type="evidence" value="ECO:0000318"/>
    <property type="project" value="GO_Central"/>
</dbReference>
<dbReference type="GO" id="GO:0005829">
    <property type="term" value="C:cytosol"/>
    <property type="evidence" value="ECO:0000318"/>
    <property type="project" value="GO_Central"/>
</dbReference>
<dbReference type="GO" id="GO:0004399">
    <property type="term" value="F:histidinol dehydrogenase activity"/>
    <property type="evidence" value="ECO:0000318"/>
    <property type="project" value="GO_Central"/>
</dbReference>
<dbReference type="GO" id="GO:0051287">
    <property type="term" value="F:NAD binding"/>
    <property type="evidence" value="ECO:0007669"/>
    <property type="project" value="InterPro"/>
</dbReference>
<dbReference type="GO" id="GO:0008270">
    <property type="term" value="F:zinc ion binding"/>
    <property type="evidence" value="ECO:0007669"/>
    <property type="project" value="UniProtKB-UniRule"/>
</dbReference>
<dbReference type="GO" id="GO:0000105">
    <property type="term" value="P:L-histidine biosynthetic process"/>
    <property type="evidence" value="ECO:0000318"/>
    <property type="project" value="GO_Central"/>
</dbReference>
<dbReference type="CDD" id="cd06572">
    <property type="entry name" value="Histidinol_dh"/>
    <property type="match status" value="1"/>
</dbReference>
<dbReference type="FunFam" id="1.20.5.1300:FF:000001">
    <property type="entry name" value="Histidine biosynthesis trifunctional protein"/>
    <property type="match status" value="1"/>
</dbReference>
<dbReference type="FunFam" id="3.40.50.1980:FF:000001">
    <property type="entry name" value="Histidinol dehydrogenase"/>
    <property type="match status" value="1"/>
</dbReference>
<dbReference type="Gene3D" id="1.20.5.1300">
    <property type="match status" value="1"/>
</dbReference>
<dbReference type="Gene3D" id="3.40.50.1980">
    <property type="entry name" value="Nitrogenase molybdenum iron protein domain"/>
    <property type="match status" value="2"/>
</dbReference>
<dbReference type="HAMAP" id="MF_01024">
    <property type="entry name" value="HisD"/>
    <property type="match status" value="1"/>
</dbReference>
<dbReference type="InterPro" id="IPR016161">
    <property type="entry name" value="Ald_DH/histidinol_DH"/>
</dbReference>
<dbReference type="InterPro" id="IPR001692">
    <property type="entry name" value="Histidinol_DH_CS"/>
</dbReference>
<dbReference type="InterPro" id="IPR022695">
    <property type="entry name" value="Histidinol_DH_monofunct"/>
</dbReference>
<dbReference type="InterPro" id="IPR012131">
    <property type="entry name" value="Hstdl_DH"/>
</dbReference>
<dbReference type="NCBIfam" id="TIGR00069">
    <property type="entry name" value="hisD"/>
    <property type="match status" value="1"/>
</dbReference>
<dbReference type="PANTHER" id="PTHR21256:SF2">
    <property type="entry name" value="HISTIDINE BIOSYNTHESIS TRIFUNCTIONAL PROTEIN"/>
    <property type="match status" value="1"/>
</dbReference>
<dbReference type="PANTHER" id="PTHR21256">
    <property type="entry name" value="HISTIDINOL DEHYDROGENASE HDH"/>
    <property type="match status" value="1"/>
</dbReference>
<dbReference type="Pfam" id="PF00815">
    <property type="entry name" value="Histidinol_dh"/>
    <property type="match status" value="1"/>
</dbReference>
<dbReference type="PIRSF" id="PIRSF000099">
    <property type="entry name" value="Histidinol_dh"/>
    <property type="match status" value="1"/>
</dbReference>
<dbReference type="PRINTS" id="PR00083">
    <property type="entry name" value="HOLDHDRGNASE"/>
</dbReference>
<dbReference type="SUPFAM" id="SSF53720">
    <property type="entry name" value="ALDH-like"/>
    <property type="match status" value="1"/>
</dbReference>
<dbReference type="PROSITE" id="PS00611">
    <property type="entry name" value="HISOL_DEHYDROGENASE"/>
    <property type="match status" value="1"/>
</dbReference>
<evidence type="ECO:0000255" key="1">
    <source>
        <dbReference type="HAMAP-Rule" id="MF_01024"/>
    </source>
</evidence>